<proteinExistence type="inferred from homology"/>
<reference key="1">
    <citation type="journal article" date="2007" name="J. Bacteriol.">
        <title>The complete genome sequence of the lactic acid bacterial paradigm Lactococcus lactis subsp. cremoris MG1363.</title>
        <authorList>
            <person name="Wegmann U."/>
            <person name="O'Connell-Motherway M."/>
            <person name="Zomer A."/>
            <person name="Buist G."/>
            <person name="Shearman C."/>
            <person name="Canchaya C."/>
            <person name="Ventura M."/>
            <person name="Goesmann A."/>
            <person name="Gasson M.J."/>
            <person name="Kuipers O.P."/>
            <person name="van Sinderen D."/>
            <person name="Kok J."/>
        </authorList>
    </citation>
    <scope>NUCLEOTIDE SEQUENCE [LARGE SCALE GENOMIC DNA]</scope>
    <source>
        <strain>MG1363</strain>
    </source>
</reference>
<organism>
    <name type="scientific">Lactococcus lactis subsp. cremoris (strain MG1363)</name>
    <dbReference type="NCBI Taxonomy" id="416870"/>
    <lineage>
        <taxon>Bacteria</taxon>
        <taxon>Bacillati</taxon>
        <taxon>Bacillota</taxon>
        <taxon>Bacilli</taxon>
        <taxon>Lactobacillales</taxon>
        <taxon>Streptococcaceae</taxon>
        <taxon>Lactococcus</taxon>
        <taxon>Lactococcus cremoris subsp. cremoris</taxon>
    </lineage>
</organism>
<comment type="function">
    <text evidence="1">Catalyzes the interconversion of beta-pyran and beta-furan forms of D-ribose.</text>
</comment>
<comment type="catalytic activity">
    <reaction evidence="1">
        <text>beta-D-ribopyranose = beta-D-ribofuranose</text>
        <dbReference type="Rhea" id="RHEA:25432"/>
        <dbReference type="ChEBI" id="CHEBI:27476"/>
        <dbReference type="ChEBI" id="CHEBI:47002"/>
        <dbReference type="EC" id="5.4.99.62"/>
    </reaction>
</comment>
<comment type="pathway">
    <text evidence="1">Carbohydrate metabolism; D-ribose degradation; D-ribose 5-phosphate from beta-D-ribopyranose: step 1/2.</text>
</comment>
<comment type="subunit">
    <text evidence="1">Homodecamer.</text>
</comment>
<comment type="subcellular location">
    <subcellularLocation>
        <location evidence="1">Cytoplasm</location>
    </subcellularLocation>
</comment>
<comment type="similarity">
    <text evidence="1">Belongs to the RbsD / FucU family. RbsD subfamily.</text>
</comment>
<dbReference type="EC" id="5.4.99.62" evidence="1"/>
<dbReference type="EMBL" id="AM406671">
    <property type="protein sequence ID" value="CAL97387.1"/>
    <property type="molecule type" value="Genomic_DNA"/>
</dbReference>
<dbReference type="RefSeq" id="WP_011834764.1">
    <property type="nucleotide sequence ID" value="NC_009004.1"/>
</dbReference>
<dbReference type="SMR" id="A2RJD5"/>
<dbReference type="STRING" id="416870.llmg_0786"/>
<dbReference type="GeneID" id="61109888"/>
<dbReference type="KEGG" id="llm:llmg_0786"/>
<dbReference type="eggNOG" id="COG1869">
    <property type="taxonomic scope" value="Bacteria"/>
</dbReference>
<dbReference type="HOGENOM" id="CLU_135498_0_0_9"/>
<dbReference type="OrthoDB" id="9805009at2"/>
<dbReference type="PhylomeDB" id="A2RJD5"/>
<dbReference type="UniPathway" id="UPA00916">
    <property type="reaction ID" value="UER00888"/>
</dbReference>
<dbReference type="Proteomes" id="UP000000364">
    <property type="component" value="Chromosome"/>
</dbReference>
<dbReference type="GO" id="GO:0005829">
    <property type="term" value="C:cytosol"/>
    <property type="evidence" value="ECO:0007669"/>
    <property type="project" value="TreeGrafter"/>
</dbReference>
<dbReference type="GO" id="GO:0062193">
    <property type="term" value="F:D-ribose pyranase activity"/>
    <property type="evidence" value="ECO:0007669"/>
    <property type="project" value="UniProtKB-EC"/>
</dbReference>
<dbReference type="GO" id="GO:0016872">
    <property type="term" value="F:intramolecular lyase activity"/>
    <property type="evidence" value="ECO:0007669"/>
    <property type="project" value="UniProtKB-UniRule"/>
</dbReference>
<dbReference type="GO" id="GO:0048029">
    <property type="term" value="F:monosaccharide binding"/>
    <property type="evidence" value="ECO:0007669"/>
    <property type="project" value="InterPro"/>
</dbReference>
<dbReference type="GO" id="GO:0019303">
    <property type="term" value="P:D-ribose catabolic process"/>
    <property type="evidence" value="ECO:0007669"/>
    <property type="project" value="UniProtKB-UniRule"/>
</dbReference>
<dbReference type="Gene3D" id="3.40.1650.10">
    <property type="entry name" value="RbsD-like domain"/>
    <property type="match status" value="1"/>
</dbReference>
<dbReference type="HAMAP" id="MF_01661">
    <property type="entry name" value="D_rib_pyranase"/>
    <property type="match status" value="1"/>
</dbReference>
<dbReference type="InterPro" id="IPR023064">
    <property type="entry name" value="D-ribose_pyranase"/>
</dbReference>
<dbReference type="InterPro" id="IPR023750">
    <property type="entry name" value="RbsD-like_sf"/>
</dbReference>
<dbReference type="InterPro" id="IPR007721">
    <property type="entry name" value="RbsD_FucU"/>
</dbReference>
<dbReference type="NCBIfam" id="NF008761">
    <property type="entry name" value="PRK11797.1"/>
    <property type="match status" value="1"/>
</dbReference>
<dbReference type="PANTHER" id="PTHR37831">
    <property type="entry name" value="D-RIBOSE PYRANASE"/>
    <property type="match status" value="1"/>
</dbReference>
<dbReference type="PANTHER" id="PTHR37831:SF1">
    <property type="entry name" value="D-RIBOSE PYRANASE"/>
    <property type="match status" value="1"/>
</dbReference>
<dbReference type="Pfam" id="PF05025">
    <property type="entry name" value="RbsD_FucU"/>
    <property type="match status" value="1"/>
</dbReference>
<dbReference type="SUPFAM" id="SSF102546">
    <property type="entry name" value="RbsD-like"/>
    <property type="match status" value="1"/>
</dbReference>
<protein>
    <recommendedName>
        <fullName evidence="1">D-ribose pyranase</fullName>
        <ecNumber evidence="1">5.4.99.62</ecNumber>
    </recommendedName>
</protein>
<gene>
    <name evidence="1" type="primary">rbsD</name>
    <name type="ordered locus">llmg_0786</name>
</gene>
<sequence length="132" mass="14550">MKKEGILNSELAKIADDLGHTDQVCIGDLGLPVPSGVKKIDLALTRGKPTFQEVLDIYLENILVEKIYLADEIKENNPEQLKILLTKLSADVEVVFVSHETLKLMNHDVKAVVRTGENTPYSNIILQSGVAL</sequence>
<keyword id="KW-0119">Carbohydrate metabolism</keyword>
<keyword id="KW-0963">Cytoplasm</keyword>
<keyword id="KW-0413">Isomerase</keyword>
<feature type="chain" id="PRO_0000346222" description="D-ribose pyranase">
    <location>
        <begin position="1"/>
        <end position="132"/>
    </location>
</feature>
<feature type="active site" description="Proton donor" evidence="1">
    <location>
        <position position="20"/>
    </location>
</feature>
<feature type="binding site" evidence="1">
    <location>
        <position position="28"/>
    </location>
    <ligand>
        <name>substrate</name>
    </ligand>
</feature>
<feature type="binding site" evidence="1">
    <location>
        <position position="99"/>
    </location>
    <ligand>
        <name>substrate</name>
    </ligand>
</feature>
<feature type="binding site" evidence="1">
    <location>
        <begin position="121"/>
        <end position="123"/>
    </location>
    <ligand>
        <name>substrate</name>
    </ligand>
</feature>
<accession>A2RJD5</accession>
<evidence type="ECO:0000255" key="1">
    <source>
        <dbReference type="HAMAP-Rule" id="MF_01661"/>
    </source>
</evidence>
<name>RBSD_LACLM</name>